<keyword id="KW-1185">Reference proteome</keyword>
<keyword id="KW-0732">Signal</keyword>
<proteinExistence type="inferred from homology"/>
<name>Y478_RICPR</name>
<protein>
    <recommendedName>
        <fullName>Uncharacterized protein RP478</fullName>
    </recommendedName>
</protein>
<reference key="1">
    <citation type="journal article" date="1998" name="Nature">
        <title>The genome sequence of Rickettsia prowazekii and the origin of mitochondria.</title>
        <authorList>
            <person name="Andersson S.G.E."/>
            <person name="Zomorodipour A."/>
            <person name="Andersson J.O."/>
            <person name="Sicheritz-Ponten T."/>
            <person name="Alsmark U.C.M."/>
            <person name="Podowski R.M."/>
            <person name="Naeslund A.K."/>
            <person name="Eriksson A.-S."/>
            <person name="Winkler H.H."/>
            <person name="Kurland C.G."/>
        </authorList>
    </citation>
    <scope>NUCLEOTIDE SEQUENCE [LARGE SCALE GENOMIC DNA]</scope>
    <source>
        <strain>Madrid E</strain>
    </source>
</reference>
<evidence type="ECO:0000255" key="1"/>
<accession>Q9ZD66</accession>
<sequence>MKKILIIILFIIIFIVLIYSGLWFVIMFSLSHSINQKYSGVHLNIGKGNNNPHQQYLVKFSKVQPYGFPFKLGIMVINWQEESINRAIEFTKPINIGYDLLGQKLFINFSGEALGKFKPVQRGFGVKFYNENCILSAKIPLNLKLFKMVLLKKNLFEFLNLIENIKFISDKTQIFDLVDNQKLYEEDHTILTMLVDKRQYYTSKQDFLNNIPQKLEFYYETEIIQSNLEDRIIPAGLLLYRPAWNNNFKFSGNFLISTSSLHFKDIAKDLTIKVNNAKINSNNFENNMNLLYKGKLNDFGNSNIHLSIESQFKLKPGFIIGFLEFLKKNYDKQTYLLKFSDNKIYKNFNNELVYILNNNKPYNFSILEDRPYHFNFNINLVTELKKLTRVQINTLSLYSNTSGFNITNETIINDLKDSYTKGIIVINNYSKIIEILSFYIYGVGSFKNLSKESQIVHIEALQSFLKTISDHPNSSNLIDTSIKYEFNLSDLNKAKIGNIDDINKLIPLYYLSLYQAAVKKMEPGANVKEKILELIPSINQKILEECVLSDIVTQ</sequence>
<organism>
    <name type="scientific">Rickettsia prowazekii (strain Madrid E)</name>
    <dbReference type="NCBI Taxonomy" id="272947"/>
    <lineage>
        <taxon>Bacteria</taxon>
        <taxon>Pseudomonadati</taxon>
        <taxon>Pseudomonadota</taxon>
        <taxon>Alphaproteobacteria</taxon>
        <taxon>Rickettsiales</taxon>
        <taxon>Rickettsiaceae</taxon>
        <taxon>Rickettsieae</taxon>
        <taxon>Rickettsia</taxon>
        <taxon>typhus group</taxon>
    </lineage>
</organism>
<feature type="signal peptide" evidence="1">
    <location>
        <begin position="1"/>
        <end position="33"/>
    </location>
</feature>
<feature type="chain" id="PRO_0000014226" description="Uncharacterized protein RP478">
    <location>
        <begin position="34"/>
        <end position="554"/>
    </location>
</feature>
<gene>
    <name type="ordered locus">RP478</name>
</gene>
<dbReference type="EMBL" id="AJ235271">
    <property type="protein sequence ID" value="CAA14933.1"/>
    <property type="molecule type" value="Genomic_DNA"/>
</dbReference>
<dbReference type="RefSeq" id="NP_220857.1">
    <property type="nucleotide sequence ID" value="NC_000963.1"/>
</dbReference>
<dbReference type="RefSeq" id="WP_010886304.1">
    <property type="nucleotide sequence ID" value="NC_000963.1"/>
</dbReference>
<dbReference type="SMR" id="Q9ZD66"/>
<dbReference type="STRING" id="272947.gene:17555558"/>
<dbReference type="EnsemblBacteria" id="CAA14933">
    <property type="protein sequence ID" value="CAA14933"/>
    <property type="gene ID" value="CAA14933"/>
</dbReference>
<dbReference type="KEGG" id="rpr:RP478"/>
<dbReference type="PATRIC" id="fig|272947.5.peg.490"/>
<dbReference type="eggNOG" id="ENOG50301A9">
    <property type="taxonomic scope" value="Bacteria"/>
</dbReference>
<dbReference type="HOGENOM" id="CLU_468409_0_0_5"/>
<dbReference type="OrthoDB" id="7160460at2"/>
<dbReference type="Proteomes" id="UP000002480">
    <property type="component" value="Chromosome"/>
</dbReference>